<sequence length="705" mass="77681">MPRNTALEKYRNIGICAHVDAGKTTTTERILFYTGLSHKIGEVHDGAATMDWMEQEQERGITITSAATTTFWSGMDQQFDKHRINIIDTPGHVDFTIEVERSLRVLDGAVVVFCGSSGVEPQSETVWRQANKYGVPRIVFVNKMDRSGADFERVCGQIRTRLKANVVPVQLNIGAEEDFKGVVDLIRMKAIMWNEADQGLTYDLVDIPAELQDRAEELRMEMMEAAAEASEELMDKYLEEGELSNEEIKQGLRARVLANEIVLAFCGSAFKNKGVQAVLDGVVEYLPAPNQVPAIKCETEDGEPASRSSSDDEPFAALAFKLATDPFVGNLTFIRVYSGVLKSGDAVYNPVKGKKERVGRIVQMHANKREEIKEVRAGDIAACIGLKDVTTGDTLCDLDKPVILERMDFPEPVISVAVEPKTKADQEKMSIALGKLAAEDPSFRVKTDEESGQTIISGMGELHLDIIVDRMRREFKVEANVGNPQVAYRETIRGTVEQNSKFVRQSGGRGQYGHVVVKFEPLEVSTNDAGEEKIFEFVDEIVGGVIPKEFIGPVAKGIEEQMTNGVLAGYPMIGVKATLFDGSYHDVDSSEMAFKIAGSMALKEGAKKANACILEPIMKVEVVTPEDYLGDVMGDLNRRRGIIEGMDENPSGRVVSALVPLAEMFGYATNVRSMSQGRASFSMEFKKYAEVPNNIADEIIKSRNS</sequence>
<keyword id="KW-0963">Cytoplasm</keyword>
<keyword id="KW-0251">Elongation factor</keyword>
<keyword id="KW-0342">GTP-binding</keyword>
<keyword id="KW-0547">Nucleotide-binding</keyword>
<keyword id="KW-0648">Protein biosynthesis</keyword>
<comment type="function">
    <text evidence="1">Catalyzes the GTP-dependent ribosomal translocation step during translation elongation. During this step, the ribosome changes from the pre-translocational (PRE) to the post-translocational (POST) state as the newly formed A-site-bound peptidyl-tRNA and P-site-bound deacylated tRNA move to the P and E sites, respectively. Catalyzes the coordinated movement of the two tRNA molecules, the mRNA and conformational changes in the ribosome.</text>
</comment>
<comment type="subcellular location">
    <subcellularLocation>
        <location evidence="1">Cytoplasm</location>
    </subcellularLocation>
</comment>
<comment type="similarity">
    <text evidence="1">Belongs to the TRAFAC class translation factor GTPase superfamily. Classic translation factor GTPase family. EF-G/EF-2 subfamily.</text>
</comment>
<proteinExistence type="inferred from homology"/>
<reference key="1">
    <citation type="submission" date="2007-12" db="EMBL/GenBank/DDBJ databases">
        <title>Complete sequence of chromosome of Francisella philomiragia subsp. philomiragia ATCC 25017.</title>
        <authorList>
            <consortium name="US DOE Joint Genome Institute"/>
            <person name="Copeland A."/>
            <person name="Lucas S."/>
            <person name="Lapidus A."/>
            <person name="Barry K."/>
            <person name="Detter J.C."/>
            <person name="Glavina del Rio T."/>
            <person name="Hammon N."/>
            <person name="Israni S."/>
            <person name="Dalin E."/>
            <person name="Tice H."/>
            <person name="Pitluck S."/>
            <person name="Chain P."/>
            <person name="Malfatti S."/>
            <person name="Shin M."/>
            <person name="Vergez L."/>
            <person name="Schmutz J."/>
            <person name="Larimer F."/>
            <person name="Land M."/>
            <person name="Hauser L."/>
            <person name="Richardson P."/>
        </authorList>
    </citation>
    <scope>NUCLEOTIDE SEQUENCE [LARGE SCALE GENOMIC DNA]</scope>
    <source>
        <strain>ATCC 25017 / CCUG 19701 / FSC 153 / O#319-036</strain>
    </source>
</reference>
<accession>B0U0Z1</accession>
<dbReference type="EMBL" id="CP000937">
    <property type="protein sequence ID" value="ABZ86807.1"/>
    <property type="molecule type" value="Genomic_DNA"/>
</dbReference>
<dbReference type="SMR" id="B0U0Z1"/>
<dbReference type="KEGG" id="fph:Fphi_0588"/>
<dbReference type="eggNOG" id="COG0480">
    <property type="taxonomic scope" value="Bacteria"/>
</dbReference>
<dbReference type="HOGENOM" id="CLU_002794_4_1_6"/>
<dbReference type="GO" id="GO:0005737">
    <property type="term" value="C:cytoplasm"/>
    <property type="evidence" value="ECO:0007669"/>
    <property type="project" value="UniProtKB-SubCell"/>
</dbReference>
<dbReference type="GO" id="GO:0005525">
    <property type="term" value="F:GTP binding"/>
    <property type="evidence" value="ECO:0007669"/>
    <property type="project" value="UniProtKB-UniRule"/>
</dbReference>
<dbReference type="GO" id="GO:0003924">
    <property type="term" value="F:GTPase activity"/>
    <property type="evidence" value="ECO:0007669"/>
    <property type="project" value="InterPro"/>
</dbReference>
<dbReference type="GO" id="GO:0097216">
    <property type="term" value="F:guanosine tetraphosphate binding"/>
    <property type="evidence" value="ECO:0007669"/>
    <property type="project" value="UniProtKB-ARBA"/>
</dbReference>
<dbReference type="GO" id="GO:0003746">
    <property type="term" value="F:translation elongation factor activity"/>
    <property type="evidence" value="ECO:0007669"/>
    <property type="project" value="UniProtKB-UniRule"/>
</dbReference>
<dbReference type="GO" id="GO:0032790">
    <property type="term" value="P:ribosome disassembly"/>
    <property type="evidence" value="ECO:0007669"/>
    <property type="project" value="TreeGrafter"/>
</dbReference>
<dbReference type="CDD" id="cd01886">
    <property type="entry name" value="EF-G"/>
    <property type="match status" value="1"/>
</dbReference>
<dbReference type="CDD" id="cd16262">
    <property type="entry name" value="EFG_III"/>
    <property type="match status" value="1"/>
</dbReference>
<dbReference type="CDD" id="cd01434">
    <property type="entry name" value="EFG_mtEFG1_IV"/>
    <property type="match status" value="1"/>
</dbReference>
<dbReference type="CDD" id="cd03713">
    <property type="entry name" value="EFG_mtEFG_C"/>
    <property type="match status" value="1"/>
</dbReference>
<dbReference type="CDD" id="cd04088">
    <property type="entry name" value="EFG_mtEFG_II"/>
    <property type="match status" value="1"/>
</dbReference>
<dbReference type="FunFam" id="2.40.30.10:FF:000006">
    <property type="entry name" value="Elongation factor G"/>
    <property type="match status" value="1"/>
</dbReference>
<dbReference type="FunFam" id="3.30.230.10:FF:000003">
    <property type="entry name" value="Elongation factor G"/>
    <property type="match status" value="1"/>
</dbReference>
<dbReference type="FunFam" id="3.30.70.240:FF:000001">
    <property type="entry name" value="Elongation factor G"/>
    <property type="match status" value="1"/>
</dbReference>
<dbReference type="FunFam" id="3.30.70.870:FF:000001">
    <property type="entry name" value="Elongation factor G"/>
    <property type="match status" value="1"/>
</dbReference>
<dbReference type="FunFam" id="3.40.50.300:FF:000029">
    <property type="entry name" value="Elongation factor G"/>
    <property type="match status" value="1"/>
</dbReference>
<dbReference type="Gene3D" id="3.30.230.10">
    <property type="match status" value="1"/>
</dbReference>
<dbReference type="Gene3D" id="3.30.70.240">
    <property type="match status" value="1"/>
</dbReference>
<dbReference type="Gene3D" id="3.30.70.870">
    <property type="entry name" value="Elongation Factor G (Translational Gtpase), domain 3"/>
    <property type="match status" value="1"/>
</dbReference>
<dbReference type="Gene3D" id="3.40.50.300">
    <property type="entry name" value="P-loop containing nucleotide triphosphate hydrolases"/>
    <property type="match status" value="1"/>
</dbReference>
<dbReference type="Gene3D" id="2.40.30.10">
    <property type="entry name" value="Translation factors"/>
    <property type="match status" value="1"/>
</dbReference>
<dbReference type="HAMAP" id="MF_00054_B">
    <property type="entry name" value="EF_G_EF_2_B"/>
    <property type="match status" value="1"/>
</dbReference>
<dbReference type="InterPro" id="IPR041095">
    <property type="entry name" value="EFG_II"/>
</dbReference>
<dbReference type="InterPro" id="IPR009022">
    <property type="entry name" value="EFG_III"/>
</dbReference>
<dbReference type="InterPro" id="IPR035647">
    <property type="entry name" value="EFG_III/V"/>
</dbReference>
<dbReference type="InterPro" id="IPR047872">
    <property type="entry name" value="EFG_IV"/>
</dbReference>
<dbReference type="InterPro" id="IPR035649">
    <property type="entry name" value="EFG_V"/>
</dbReference>
<dbReference type="InterPro" id="IPR000640">
    <property type="entry name" value="EFG_V-like"/>
</dbReference>
<dbReference type="InterPro" id="IPR004161">
    <property type="entry name" value="EFTu-like_2"/>
</dbReference>
<dbReference type="InterPro" id="IPR031157">
    <property type="entry name" value="G_TR_CS"/>
</dbReference>
<dbReference type="InterPro" id="IPR027417">
    <property type="entry name" value="P-loop_NTPase"/>
</dbReference>
<dbReference type="InterPro" id="IPR020568">
    <property type="entry name" value="Ribosomal_Su5_D2-typ_SF"/>
</dbReference>
<dbReference type="InterPro" id="IPR014721">
    <property type="entry name" value="Ribsml_uS5_D2-typ_fold_subgr"/>
</dbReference>
<dbReference type="InterPro" id="IPR005225">
    <property type="entry name" value="Small_GTP-bd"/>
</dbReference>
<dbReference type="InterPro" id="IPR000795">
    <property type="entry name" value="T_Tr_GTP-bd_dom"/>
</dbReference>
<dbReference type="InterPro" id="IPR009000">
    <property type="entry name" value="Transl_B-barrel_sf"/>
</dbReference>
<dbReference type="InterPro" id="IPR004540">
    <property type="entry name" value="Transl_elong_EFG/EF2"/>
</dbReference>
<dbReference type="InterPro" id="IPR005517">
    <property type="entry name" value="Transl_elong_EFG/EF2_IV"/>
</dbReference>
<dbReference type="NCBIfam" id="TIGR00484">
    <property type="entry name" value="EF-G"/>
    <property type="match status" value="1"/>
</dbReference>
<dbReference type="NCBIfam" id="NF009381">
    <property type="entry name" value="PRK12740.1-5"/>
    <property type="match status" value="1"/>
</dbReference>
<dbReference type="NCBIfam" id="TIGR00231">
    <property type="entry name" value="small_GTP"/>
    <property type="match status" value="1"/>
</dbReference>
<dbReference type="PANTHER" id="PTHR43261:SF1">
    <property type="entry name" value="RIBOSOME-RELEASING FACTOR 2, MITOCHONDRIAL"/>
    <property type="match status" value="1"/>
</dbReference>
<dbReference type="PANTHER" id="PTHR43261">
    <property type="entry name" value="TRANSLATION ELONGATION FACTOR G-RELATED"/>
    <property type="match status" value="1"/>
</dbReference>
<dbReference type="Pfam" id="PF00679">
    <property type="entry name" value="EFG_C"/>
    <property type="match status" value="1"/>
</dbReference>
<dbReference type="Pfam" id="PF14492">
    <property type="entry name" value="EFG_III"/>
    <property type="match status" value="1"/>
</dbReference>
<dbReference type="Pfam" id="PF03764">
    <property type="entry name" value="EFG_IV"/>
    <property type="match status" value="1"/>
</dbReference>
<dbReference type="Pfam" id="PF00009">
    <property type="entry name" value="GTP_EFTU"/>
    <property type="match status" value="1"/>
</dbReference>
<dbReference type="Pfam" id="PF03144">
    <property type="entry name" value="GTP_EFTU_D2"/>
    <property type="match status" value="1"/>
</dbReference>
<dbReference type="PRINTS" id="PR00315">
    <property type="entry name" value="ELONGATNFCT"/>
</dbReference>
<dbReference type="SMART" id="SM00838">
    <property type="entry name" value="EFG_C"/>
    <property type="match status" value="1"/>
</dbReference>
<dbReference type="SMART" id="SM00889">
    <property type="entry name" value="EFG_IV"/>
    <property type="match status" value="1"/>
</dbReference>
<dbReference type="SUPFAM" id="SSF54980">
    <property type="entry name" value="EF-G C-terminal domain-like"/>
    <property type="match status" value="2"/>
</dbReference>
<dbReference type="SUPFAM" id="SSF52540">
    <property type="entry name" value="P-loop containing nucleoside triphosphate hydrolases"/>
    <property type="match status" value="1"/>
</dbReference>
<dbReference type="SUPFAM" id="SSF54211">
    <property type="entry name" value="Ribosomal protein S5 domain 2-like"/>
    <property type="match status" value="1"/>
</dbReference>
<dbReference type="SUPFAM" id="SSF50447">
    <property type="entry name" value="Translation proteins"/>
    <property type="match status" value="1"/>
</dbReference>
<dbReference type="PROSITE" id="PS00301">
    <property type="entry name" value="G_TR_1"/>
    <property type="match status" value="1"/>
</dbReference>
<dbReference type="PROSITE" id="PS51722">
    <property type="entry name" value="G_TR_2"/>
    <property type="match status" value="1"/>
</dbReference>
<name>EFG_FRAP2</name>
<organism>
    <name type="scientific">Francisella philomiragia subsp. philomiragia (strain ATCC 25017 / CCUG 19701 / FSC 153 / O#319-036)</name>
    <dbReference type="NCBI Taxonomy" id="484022"/>
    <lineage>
        <taxon>Bacteria</taxon>
        <taxon>Pseudomonadati</taxon>
        <taxon>Pseudomonadota</taxon>
        <taxon>Gammaproteobacteria</taxon>
        <taxon>Thiotrichales</taxon>
        <taxon>Francisellaceae</taxon>
        <taxon>Francisella</taxon>
    </lineage>
</organism>
<protein>
    <recommendedName>
        <fullName evidence="1">Elongation factor G</fullName>
        <shortName evidence="1">EF-G</shortName>
    </recommendedName>
</protein>
<gene>
    <name evidence="1" type="primary">fusA</name>
    <name type="ordered locus">Fphi_0588</name>
</gene>
<evidence type="ECO:0000255" key="1">
    <source>
        <dbReference type="HAMAP-Rule" id="MF_00054"/>
    </source>
</evidence>
<feature type="chain" id="PRO_1000074959" description="Elongation factor G">
    <location>
        <begin position="1"/>
        <end position="705"/>
    </location>
</feature>
<feature type="domain" description="tr-type G">
    <location>
        <begin position="8"/>
        <end position="290"/>
    </location>
</feature>
<feature type="binding site" evidence="1">
    <location>
        <begin position="17"/>
        <end position="24"/>
    </location>
    <ligand>
        <name>GTP</name>
        <dbReference type="ChEBI" id="CHEBI:37565"/>
    </ligand>
</feature>
<feature type="binding site" evidence="1">
    <location>
        <begin position="88"/>
        <end position="92"/>
    </location>
    <ligand>
        <name>GTP</name>
        <dbReference type="ChEBI" id="CHEBI:37565"/>
    </ligand>
</feature>
<feature type="binding site" evidence="1">
    <location>
        <begin position="142"/>
        <end position="145"/>
    </location>
    <ligand>
        <name>GTP</name>
        <dbReference type="ChEBI" id="CHEBI:37565"/>
    </ligand>
</feature>